<accession>Q5NFM5</accession>
<comment type="function">
    <text evidence="1">Catalyzes the reversible conversion of ribose-5-phosphate to ribulose 5-phosphate.</text>
</comment>
<comment type="catalytic activity">
    <reaction evidence="1">
        <text>aldehydo-D-ribose 5-phosphate = D-ribulose 5-phosphate</text>
        <dbReference type="Rhea" id="RHEA:14657"/>
        <dbReference type="ChEBI" id="CHEBI:58121"/>
        <dbReference type="ChEBI" id="CHEBI:58273"/>
        <dbReference type="EC" id="5.3.1.6"/>
    </reaction>
</comment>
<comment type="pathway">
    <text evidence="1">Carbohydrate degradation; pentose phosphate pathway; D-ribose 5-phosphate from D-ribulose 5-phosphate (non-oxidative stage): step 1/1.</text>
</comment>
<comment type="subunit">
    <text evidence="1 2 3">Homodimer and homotetramer.</text>
</comment>
<comment type="similarity">
    <text evidence="1">Belongs to the ribose 5-phosphate isomerase family.</text>
</comment>
<organism>
    <name type="scientific">Francisella tularensis subsp. tularensis (strain SCHU S4 / Schu 4)</name>
    <dbReference type="NCBI Taxonomy" id="177416"/>
    <lineage>
        <taxon>Bacteria</taxon>
        <taxon>Pseudomonadati</taxon>
        <taxon>Pseudomonadota</taxon>
        <taxon>Gammaproteobacteria</taxon>
        <taxon>Thiotrichales</taxon>
        <taxon>Francisellaceae</taxon>
        <taxon>Francisella</taxon>
    </lineage>
</organism>
<name>RPIA_FRATT</name>
<sequence length="224" mass="24466">MFFNKKNNQDELKKLAATEAAKSITTEITLGVGTGSTVGFLIEELVNYRDKIKTVVSSSEDSTRKLKALGFDVVDLNYAGEIDLYIDGADECNNHKELIKGGGAALTREKICVAAAKKFICIIDESKKVNTLGNFPLPIEVIPMARSYIARQIVKLGGQPVYREQTITDNGNVILDVYNLKIDNPLKLETELNQITGVVTNGIFALKPADTVIMATKDSNIVVL</sequence>
<evidence type="ECO:0000255" key="1">
    <source>
        <dbReference type="HAMAP-Rule" id="MF_00170"/>
    </source>
</evidence>
<evidence type="ECO:0000269" key="2">
    <source ref="2"/>
</evidence>
<evidence type="ECO:0000269" key="3">
    <source ref="3"/>
</evidence>
<evidence type="ECO:0000305" key="4"/>
<evidence type="ECO:0007829" key="5">
    <source>
        <dbReference type="PDB" id="3KWM"/>
    </source>
</evidence>
<evidence type="ECO:0007829" key="6">
    <source>
        <dbReference type="PDB" id="4IO1"/>
    </source>
</evidence>
<reference key="1">
    <citation type="journal article" date="2005" name="Nat. Genet.">
        <title>The complete genome sequence of Francisella tularensis, the causative agent of tularemia.</title>
        <authorList>
            <person name="Larsson P."/>
            <person name="Oyston P.C.F."/>
            <person name="Chain P."/>
            <person name="Chu M.C."/>
            <person name="Duffield M."/>
            <person name="Fuxelius H.-H."/>
            <person name="Garcia E."/>
            <person name="Haelltorp G."/>
            <person name="Johansson D."/>
            <person name="Isherwood K.E."/>
            <person name="Karp P.D."/>
            <person name="Larsson E."/>
            <person name="Liu Y."/>
            <person name="Michell S."/>
            <person name="Prior J."/>
            <person name="Prior R."/>
            <person name="Malfatti S."/>
            <person name="Sjoestedt A."/>
            <person name="Svensson K."/>
            <person name="Thompson N."/>
            <person name="Vergez L."/>
            <person name="Wagg J.K."/>
            <person name="Wren B.W."/>
            <person name="Lindler L.E."/>
            <person name="Andersson S.G.E."/>
            <person name="Forsman M."/>
            <person name="Titball R.W."/>
        </authorList>
    </citation>
    <scope>NUCLEOTIDE SEQUENCE [LARGE SCALE GENOMIC DNA]</scope>
    <source>
        <strain>SCHU S4 / Schu 4</strain>
    </source>
</reference>
<reference key="2">
    <citation type="submission" date="2009-12" db="PDB data bank">
        <title>Crystal structure of ribose-5-isomerase A.</title>
        <authorList>
            <consortium name="Center for Structural Genomics of Infectious Diseases (CSGID)"/>
            <person name="Orlikowska M."/>
            <person name="Rostankowski R."/>
            <person name="Nakka C."/>
            <person name="Hattne J."/>
            <person name="Grimshaw S."/>
            <person name="Borek D."/>
            <person name="Otwinowski Z."/>
        </authorList>
    </citation>
    <scope>X-RAY CRYSTALLOGRAPHY (2.32 ANGSTROMS) IN COMPLEX WITH SUBSTRATE</scope>
    <scope>SUBUNIT</scope>
</reference>
<reference key="3">
    <citation type="submission" date="2013-01" db="PDB data bank">
        <title>Structural and biophysical studies of Ribose-5-Phosphate Isomerase A from Francisella tularensis.</title>
        <authorList>
            <consortium name="Center for Structural Genomics of Infectious Diseases (CSGID)"/>
            <person name="Rostankowski R."/>
            <person name="Orlikowska M."/>
            <person name="Nakka C."/>
            <person name="Grimshaw S."/>
            <person name="Borek D."/>
            <person name="Otwinowski Z."/>
        </authorList>
    </citation>
    <scope>X-RAY CRYSTALLOGRAPHY (1.65 ANGSTROMS) IN COMPLEX WITH SUBSTRATE</scope>
    <scope>SUBUNIT</scope>
</reference>
<keyword id="KW-0002">3D-structure</keyword>
<keyword id="KW-0413">Isomerase</keyword>
<keyword id="KW-1185">Reference proteome</keyword>
<protein>
    <recommendedName>
        <fullName evidence="1">Ribose-5-phosphate isomerase A</fullName>
        <ecNumber evidence="1">5.3.1.6</ecNumber>
    </recommendedName>
    <alternativeName>
        <fullName evidence="1">Phosphoriboisomerase A</fullName>
        <shortName evidence="1">PRI</shortName>
    </alternativeName>
</protein>
<dbReference type="EC" id="5.3.1.6" evidence="1"/>
<dbReference type="EMBL" id="AJ749949">
    <property type="protein sequence ID" value="CAG45841.1"/>
    <property type="molecule type" value="Genomic_DNA"/>
</dbReference>
<dbReference type="RefSeq" id="WP_003015241.1">
    <property type="nucleotide sequence ID" value="NZ_CP010290.1"/>
</dbReference>
<dbReference type="RefSeq" id="YP_170167.1">
    <property type="nucleotide sequence ID" value="NC_006570.2"/>
</dbReference>
<dbReference type="PDB" id="3KWM">
    <property type="method" value="X-ray"/>
    <property type="resolution" value="2.32 A"/>
    <property type="chains" value="A/B/C/D=1-224"/>
</dbReference>
<dbReference type="PDB" id="4IO1">
    <property type="method" value="X-ray"/>
    <property type="resolution" value="1.65 A"/>
    <property type="chains" value="A/B=1-224"/>
</dbReference>
<dbReference type="PDBsum" id="3KWM"/>
<dbReference type="PDBsum" id="4IO1"/>
<dbReference type="SMR" id="Q5NFM5"/>
<dbReference type="STRING" id="177416.FTT_1208"/>
<dbReference type="DNASU" id="3192024"/>
<dbReference type="EnsemblBacteria" id="CAG45841">
    <property type="protein sequence ID" value="CAG45841"/>
    <property type="gene ID" value="FTT_1208"/>
</dbReference>
<dbReference type="KEGG" id="ftu:FTT_1208"/>
<dbReference type="eggNOG" id="COG0120">
    <property type="taxonomic scope" value="Bacteria"/>
</dbReference>
<dbReference type="OrthoDB" id="5870696at2"/>
<dbReference type="UniPathway" id="UPA00115">
    <property type="reaction ID" value="UER00412"/>
</dbReference>
<dbReference type="EvolutionaryTrace" id="Q5NFM5"/>
<dbReference type="Proteomes" id="UP000001174">
    <property type="component" value="Chromosome"/>
</dbReference>
<dbReference type="GO" id="GO:0005829">
    <property type="term" value="C:cytosol"/>
    <property type="evidence" value="ECO:0007669"/>
    <property type="project" value="TreeGrafter"/>
</dbReference>
<dbReference type="GO" id="GO:0004751">
    <property type="term" value="F:ribose-5-phosphate isomerase activity"/>
    <property type="evidence" value="ECO:0007669"/>
    <property type="project" value="UniProtKB-UniRule"/>
</dbReference>
<dbReference type="GO" id="GO:0006014">
    <property type="term" value="P:D-ribose metabolic process"/>
    <property type="evidence" value="ECO:0007669"/>
    <property type="project" value="TreeGrafter"/>
</dbReference>
<dbReference type="GO" id="GO:0009052">
    <property type="term" value="P:pentose-phosphate shunt, non-oxidative branch"/>
    <property type="evidence" value="ECO:0007669"/>
    <property type="project" value="UniProtKB-UniRule"/>
</dbReference>
<dbReference type="CDD" id="cd01398">
    <property type="entry name" value="RPI_A"/>
    <property type="match status" value="1"/>
</dbReference>
<dbReference type="FunFam" id="3.30.70.260:FF:000004">
    <property type="entry name" value="Ribose-5-phosphate isomerase A"/>
    <property type="match status" value="1"/>
</dbReference>
<dbReference type="FunFam" id="3.40.50.1360:FF:000001">
    <property type="entry name" value="Ribose-5-phosphate isomerase A"/>
    <property type="match status" value="1"/>
</dbReference>
<dbReference type="Gene3D" id="3.30.70.260">
    <property type="match status" value="1"/>
</dbReference>
<dbReference type="Gene3D" id="3.40.50.1360">
    <property type="match status" value="1"/>
</dbReference>
<dbReference type="HAMAP" id="MF_00170">
    <property type="entry name" value="Rib_5P_isom_A"/>
    <property type="match status" value="1"/>
</dbReference>
<dbReference type="InterPro" id="IPR037171">
    <property type="entry name" value="NagB/RpiA_transferase-like"/>
</dbReference>
<dbReference type="InterPro" id="IPR020672">
    <property type="entry name" value="Ribose5P_isomerase_typA_subgr"/>
</dbReference>
<dbReference type="InterPro" id="IPR004788">
    <property type="entry name" value="Ribose5P_isomerase_type_A"/>
</dbReference>
<dbReference type="NCBIfam" id="NF001924">
    <property type="entry name" value="PRK00702.1"/>
    <property type="match status" value="1"/>
</dbReference>
<dbReference type="NCBIfam" id="TIGR00021">
    <property type="entry name" value="rpiA"/>
    <property type="match status" value="1"/>
</dbReference>
<dbReference type="PANTHER" id="PTHR11934">
    <property type="entry name" value="RIBOSE-5-PHOSPHATE ISOMERASE"/>
    <property type="match status" value="1"/>
</dbReference>
<dbReference type="PANTHER" id="PTHR11934:SF0">
    <property type="entry name" value="RIBOSE-5-PHOSPHATE ISOMERASE"/>
    <property type="match status" value="1"/>
</dbReference>
<dbReference type="Pfam" id="PF06026">
    <property type="entry name" value="Rib_5-P_isom_A"/>
    <property type="match status" value="1"/>
</dbReference>
<dbReference type="SUPFAM" id="SSF75445">
    <property type="entry name" value="D-ribose-5-phosphate isomerase (RpiA), lid domain"/>
    <property type="match status" value="1"/>
</dbReference>
<dbReference type="SUPFAM" id="SSF100950">
    <property type="entry name" value="NagB/RpiA/CoA transferase-like"/>
    <property type="match status" value="1"/>
</dbReference>
<feature type="chain" id="PRO_0000158419" description="Ribose-5-phosphate isomerase A">
    <location>
        <begin position="1"/>
        <end position="224"/>
    </location>
</feature>
<feature type="active site" description="Proton acceptor" evidence="4">
    <location>
        <position position="109"/>
    </location>
</feature>
<feature type="binding site" evidence="4">
    <location>
        <begin position="34"/>
        <end position="37"/>
    </location>
    <ligand>
        <name>substrate</name>
    </ligand>
</feature>
<feature type="binding site" evidence="1">
    <location>
        <begin position="87"/>
        <end position="90"/>
    </location>
    <ligand>
        <name>substrate</name>
    </ligand>
</feature>
<feature type="binding site" evidence="4">
    <location>
        <begin position="100"/>
        <end position="103"/>
    </location>
    <ligand>
        <name>substrate</name>
    </ligand>
</feature>
<feature type="binding site" evidence="1 2 3">
    <location>
        <position position="127"/>
    </location>
    <ligand>
        <name>substrate</name>
    </ligand>
</feature>
<feature type="helix" evidence="6">
    <location>
        <begin position="8"/>
        <end position="21"/>
    </location>
</feature>
<feature type="strand" evidence="6">
    <location>
        <begin position="26"/>
        <end position="32"/>
    </location>
</feature>
<feature type="helix" evidence="6">
    <location>
        <begin position="36"/>
        <end position="44"/>
    </location>
</feature>
<feature type="helix" evidence="6">
    <location>
        <begin position="45"/>
        <end position="48"/>
    </location>
</feature>
<feature type="turn" evidence="6">
    <location>
        <begin position="49"/>
        <end position="51"/>
    </location>
</feature>
<feature type="strand" evidence="6">
    <location>
        <begin position="52"/>
        <end position="58"/>
    </location>
</feature>
<feature type="helix" evidence="6">
    <location>
        <begin position="60"/>
        <end position="68"/>
    </location>
</feature>
<feature type="helix" evidence="6">
    <location>
        <begin position="76"/>
        <end position="79"/>
    </location>
</feature>
<feature type="strand" evidence="6">
    <location>
        <begin position="81"/>
        <end position="87"/>
    </location>
</feature>
<feature type="strand" evidence="6">
    <location>
        <begin position="90"/>
        <end position="92"/>
    </location>
</feature>
<feature type="strand" evidence="5">
    <location>
        <begin position="102"/>
        <end position="104"/>
    </location>
</feature>
<feature type="helix" evidence="6">
    <location>
        <begin position="106"/>
        <end position="114"/>
    </location>
</feature>
<feature type="strand" evidence="6">
    <location>
        <begin position="119"/>
        <end position="124"/>
    </location>
</feature>
<feature type="helix" evidence="6">
    <location>
        <begin position="125"/>
        <end position="127"/>
    </location>
</feature>
<feature type="strand" evidence="6">
    <location>
        <begin position="130"/>
        <end position="132"/>
    </location>
</feature>
<feature type="strand" evidence="6">
    <location>
        <begin position="137"/>
        <end position="141"/>
    </location>
</feature>
<feature type="helix" evidence="6">
    <location>
        <begin position="143"/>
        <end position="145"/>
    </location>
</feature>
<feature type="helix" evidence="6">
    <location>
        <begin position="146"/>
        <end position="156"/>
    </location>
</feature>
<feature type="strand" evidence="6">
    <location>
        <begin position="159"/>
        <end position="162"/>
    </location>
</feature>
<feature type="strand" evidence="6">
    <location>
        <begin position="173"/>
        <end position="179"/>
    </location>
</feature>
<feature type="helix" evidence="6">
    <location>
        <begin position="185"/>
        <end position="193"/>
    </location>
</feature>
<feature type="strand" evidence="6">
    <location>
        <begin position="198"/>
        <end position="204"/>
    </location>
</feature>
<feature type="strand" evidence="6">
    <location>
        <begin position="210"/>
        <end position="216"/>
    </location>
</feature>
<feature type="turn" evidence="6">
    <location>
        <begin position="217"/>
        <end position="219"/>
    </location>
</feature>
<feature type="strand" evidence="6">
    <location>
        <begin position="220"/>
        <end position="224"/>
    </location>
</feature>
<gene>
    <name evidence="1" type="primary">rpiA</name>
    <name type="ordered locus">FTT_1208</name>
</gene>
<proteinExistence type="evidence at protein level"/>